<name>GUC2D_HUMAN</name>
<keyword id="KW-0966">Cell projection</keyword>
<keyword id="KW-0141">cGMP biosynthesis</keyword>
<keyword id="KW-0182">Cone-rod dystrophy</keyword>
<keyword id="KW-1014">Congenital stationary night blindness</keyword>
<keyword id="KW-0225">Disease variant</keyword>
<keyword id="KW-1015">Disulfide bond</keyword>
<keyword id="KW-0256">Endoplasmic reticulum</keyword>
<keyword id="KW-0325">Glycoprotein</keyword>
<keyword id="KW-0342">GTP-binding</keyword>
<keyword id="KW-0901">Leber congenital amaurosis</keyword>
<keyword id="KW-0456">Lyase</keyword>
<keyword id="KW-0472">Membrane</keyword>
<keyword id="KW-0547">Nucleotide-binding</keyword>
<keyword id="KW-1267">Proteomics identification</keyword>
<keyword id="KW-1185">Reference proteome</keyword>
<keyword id="KW-0716">Sensory transduction</keyword>
<keyword id="KW-0732">Signal</keyword>
<keyword id="KW-0812">Transmembrane</keyword>
<keyword id="KW-1133">Transmembrane helix</keyword>
<keyword id="KW-0844">Vision</keyword>
<protein>
    <recommendedName>
        <fullName>Retinal guanylyl cyclase 1</fullName>
        <shortName>RETGC-1</shortName>
        <ecNumber evidence="12 22 28 31 32 34">4.6.1.2</ecNumber>
    </recommendedName>
    <alternativeName>
        <fullName evidence="38">CG-E</fullName>
    </alternativeName>
    <alternativeName>
        <fullName>Guanylate cyclase 2D, retinal</fullName>
    </alternativeName>
    <alternativeName>
        <fullName>Rod outer segment membrane guanylate cyclase</fullName>
        <shortName>ROS-GC</shortName>
    </alternativeName>
</protein>
<comment type="function">
    <text evidence="2 12 22 28 31 34">Catalyzes the synthesis of cyclic GMP (cGMP) in rods and cones of photoreceptors. Plays an essential role in phototransduction, by mediating cGMP replenishment (PubMed:15123990, PubMed:21928830, PubMed:26100624, PubMed:30319355, PubMed:9600905). May also participate in the trafficking of membrane-asociated proteins to the photoreceptor outer segment membrane (By similarity).</text>
</comment>
<comment type="catalytic activity">
    <reaction evidence="12 22 28 31 32 34">
        <text>GTP = 3',5'-cyclic GMP + diphosphate</text>
        <dbReference type="Rhea" id="RHEA:13665"/>
        <dbReference type="ChEBI" id="CHEBI:33019"/>
        <dbReference type="ChEBI" id="CHEBI:37565"/>
        <dbReference type="ChEBI" id="CHEBI:57746"/>
        <dbReference type="EC" id="4.6.1.2"/>
    </reaction>
</comment>
<comment type="activity regulation">
    <text evidence="2 22">Activated by GUCA1A when free calcium ions concentration is low, and inhibited by GUCA1A when free calcium ions concentration is high (By similarity). Negatively regulated by RD3; inhibits the basal and GUCA1A-stimulated guanylate cyclase activity (PubMed:21928830).</text>
</comment>
<comment type="biophysicochemical properties">
    <kinetics>
        <KM evidence="22">1.31 mM for GTP (in absence of RD3)</KM>
        <KM evidence="22">1.57 mM for GTP (in presence of 30 nM of RD3)</KM>
        <KM evidence="22">0.94 mM for GTP (in presence of 60 nM of RD3)</KM>
        <Vmax evidence="22">3.5 nmol/min/mg enzyme (in absence of RD3)</Vmax>
        <Vmax evidence="22">1.4 nmol/min/mg enzyme (in presence of 30 nM of RD3)</Vmax>
        <Vmax evidence="22">0.7 nmol/min/mg enzyme (in presence of 60 nM of RD3)</Vmax>
    </kinetics>
</comment>
<comment type="subunit">
    <text evidence="1 19 22">Homodimer; requires homodimerization for guanylyl cyclase activity (By similarity). Interacts with RD3; promotes the exit of GUCY2D from the endoplasmic reticulum and its trafficking to the photoreceptor outer segments (PubMed:21078983, PubMed:21928830). Interaction with RD3 negatively regulates guanylate cyclase activity (PubMed:21928830).</text>
</comment>
<comment type="interaction">
    <interactant intactId="EBI-1756902">
        <id>Q02846</id>
    </interactant>
    <interactant intactId="EBI-10257497">
        <id>Q7Z3Z2</id>
        <label>RD3</label>
    </interactant>
    <organismsDiffer>false</organismsDiffer>
    <experiments>3</experiments>
</comment>
<comment type="subcellular location">
    <subcellularLocation>
        <location evidence="32">Photoreceptor outer segment membrane</location>
        <topology evidence="4">Single-pass type I membrane protein</topology>
    </subcellularLocation>
    <subcellularLocation>
        <location evidence="31">Endoplasmic reticulum membrane</location>
        <topology evidence="4">Single-pass type I membrane protein</topology>
    </subcellularLocation>
</comment>
<comment type="tissue specificity">
    <text evidence="32">Retina.</text>
</comment>
<comment type="disease" evidence="8 9 12 13 15 21 29 31 33 37">
    <disease id="DI-00629">
        <name>Leber congenital amaurosis 1</name>
        <acronym>LCA1</acronym>
        <description>A severe dystrophy of the retina, typically becoming evident in the first years of life. Visual function is usually poor and often accompanied by nystagmus, sluggish or near-absent pupillary responses, photophobia, high hyperopia and keratoconus.</description>
        <dbReference type="MIM" id="204000"/>
    </disease>
    <text>The disease is caused by variants affecting the gene represented in this entry.</text>
</comment>
<comment type="disease" evidence="10 11 16 17 18 20 23 25 26 27 29 31 35 36">
    <disease id="DI-00321">
        <name>Cone-rod dystrophy 6</name>
        <acronym>CORD6</acronym>
        <description>An inherited retinal dystrophy characterized by retinal pigment deposits visible on fundus examination, predominantly in the macular region, and initial loss of cone photoreceptors followed by rod degeneration. This leads to decreased visual acuity and sensitivity in the central visual field, followed by loss of peripheral vision. Severe loss of vision occurs earlier than in retinitis pigmentosa, due to cone photoreceptors degenerating at a higher rate than rod photoreceptors.</description>
        <dbReference type="MIM" id="601777"/>
    </disease>
    <text>The disease is caused by variants affecting the gene represented in this entry.</text>
</comment>
<comment type="disease" evidence="24">
    <disease id="DI-05168">
        <name>Choroidal dystrophy, central areolar, 1</name>
        <acronym>CACD1</acronym>
        <description>A form of central areolar choroidal dystrophy, a retinal disease that affects the macula and results in a well-demarcated circumscribed area of atrophy of the pigment epithelium and choriocapillaris. CACD1 inheritance is autosomal recessive.</description>
        <dbReference type="MIM" id="215500"/>
    </disease>
    <text>The disease may be caused by variants affecting the gene represented in this entry.</text>
</comment>
<comment type="disease" evidence="30">
    <disease id="DI-05643">
        <name>Night blindness, congenital stationary, 1I</name>
        <acronym>CSNB1I</acronym>
        <description>A form of congenital stationary night blindness, a non-progressive retinal disorder characterized by impaired night vision or in dim light, with good vision only on bright days. CSNB1I patients present with night blindness from infancy or early childhood. Visual acuity is preserved, but some patients have color vision and/or visual field defects. Progression to mild retinitis pigmentosa may occur. CSNB1I inheritance is autosomal recessive.</description>
        <dbReference type="MIM" id="618555"/>
    </disease>
    <text>The disease is caused by variants affecting the gene represented in this entry.</text>
</comment>
<comment type="miscellaneous">
    <text evidence="40">The gene names for receptor guanylyl cyclases are inconsistent between mouse and human. The ortholog of the mouse Gucy2d gene is a pseudogene in humans.</text>
</comment>
<comment type="similarity">
    <text evidence="5">Belongs to the adenylyl cyclase class-4/guanylyl cyclase family.</text>
</comment>
<gene>
    <name type="primary">GUCY2D</name>
    <name type="synonym">CORD6</name>
    <name type="synonym">GUC1A4</name>
    <name evidence="39" type="synonym">GUC2D</name>
    <name type="synonym">RETGC</name>
    <name type="synonym">RETGC1</name>
</gene>
<dbReference type="EC" id="4.6.1.2" evidence="12 22 28 31 32 34"/>
<dbReference type="EMBL" id="M92432">
    <property type="protein sequence ID" value="AAA60547.1"/>
    <property type="molecule type" value="mRNA"/>
</dbReference>
<dbReference type="EMBL" id="AJ222657">
    <property type="protein sequence ID" value="CAA10914.1"/>
    <property type="molecule type" value="Genomic_DNA"/>
</dbReference>
<dbReference type="EMBL" id="L26921">
    <property type="protein sequence ID" value="AAA60366.1"/>
    <property type="molecule type" value="Genomic_DNA"/>
</dbReference>
<dbReference type="CCDS" id="CCDS11127.1"/>
<dbReference type="PIR" id="JH0717">
    <property type="entry name" value="JH0717"/>
</dbReference>
<dbReference type="RefSeq" id="NP_000171.1">
    <property type="nucleotide sequence ID" value="NM_000180.4"/>
</dbReference>
<dbReference type="RefSeq" id="XP_011522118.1">
    <property type="nucleotide sequence ID" value="XM_011523816.2"/>
</dbReference>
<dbReference type="SMR" id="Q02846"/>
<dbReference type="BioGRID" id="109255">
    <property type="interactions" value="18"/>
</dbReference>
<dbReference type="CORUM" id="Q02846"/>
<dbReference type="FunCoup" id="Q02846">
    <property type="interactions" value="561"/>
</dbReference>
<dbReference type="IntAct" id="Q02846">
    <property type="interactions" value="10"/>
</dbReference>
<dbReference type="STRING" id="9606.ENSP00000254854"/>
<dbReference type="DrugBank" id="DB08931">
    <property type="generic name" value="Riociguat"/>
</dbReference>
<dbReference type="DrugBank" id="DB15456">
    <property type="generic name" value="Vericiguat"/>
</dbReference>
<dbReference type="TCDB" id="8.A.85.1.3">
    <property type="family name" value="the guanylate cyclase (gc) family"/>
</dbReference>
<dbReference type="GlyCosmos" id="Q02846">
    <property type="glycosylation" value="1 site, No reported glycans"/>
</dbReference>
<dbReference type="GlyGen" id="Q02846">
    <property type="glycosylation" value="5 sites, 1 O-linked glycan (1 site)"/>
</dbReference>
<dbReference type="iPTMnet" id="Q02846"/>
<dbReference type="PhosphoSitePlus" id="Q02846"/>
<dbReference type="BioMuta" id="GUCY2D"/>
<dbReference type="DMDM" id="1345920"/>
<dbReference type="jPOST" id="Q02846"/>
<dbReference type="MassIVE" id="Q02846"/>
<dbReference type="PaxDb" id="9606-ENSP00000254854"/>
<dbReference type="PeptideAtlas" id="Q02846"/>
<dbReference type="ProteomicsDB" id="58131"/>
<dbReference type="Antibodypedia" id="12365">
    <property type="antibodies" value="269 antibodies from 29 providers"/>
</dbReference>
<dbReference type="DNASU" id="3000"/>
<dbReference type="Ensembl" id="ENST00000254854.5">
    <property type="protein sequence ID" value="ENSP00000254854.4"/>
    <property type="gene ID" value="ENSG00000132518.7"/>
</dbReference>
<dbReference type="GeneID" id="3000"/>
<dbReference type="KEGG" id="hsa:3000"/>
<dbReference type="MANE-Select" id="ENST00000254854.5">
    <property type="protein sequence ID" value="ENSP00000254854.4"/>
    <property type="RefSeq nucleotide sequence ID" value="NM_000180.4"/>
    <property type="RefSeq protein sequence ID" value="NP_000171.1"/>
</dbReference>
<dbReference type="UCSC" id="uc002gjt.3">
    <property type="organism name" value="human"/>
</dbReference>
<dbReference type="AGR" id="HGNC:4689"/>
<dbReference type="CTD" id="3000"/>
<dbReference type="DisGeNET" id="3000"/>
<dbReference type="GeneCards" id="GUCY2D"/>
<dbReference type="HGNC" id="HGNC:4689">
    <property type="gene designation" value="GUCY2D"/>
</dbReference>
<dbReference type="HPA" id="ENSG00000132518">
    <property type="expression patterns" value="Tissue enriched (retina)"/>
</dbReference>
<dbReference type="MalaCards" id="GUCY2D"/>
<dbReference type="MIM" id="204000">
    <property type="type" value="phenotype"/>
</dbReference>
<dbReference type="MIM" id="215500">
    <property type="type" value="phenotype"/>
</dbReference>
<dbReference type="MIM" id="300071">
    <property type="type" value="phenotype"/>
</dbReference>
<dbReference type="MIM" id="600179">
    <property type="type" value="gene"/>
</dbReference>
<dbReference type="MIM" id="601777">
    <property type="type" value="phenotype"/>
</dbReference>
<dbReference type="MIM" id="618555">
    <property type="type" value="phenotype"/>
</dbReference>
<dbReference type="neXtProt" id="NX_Q02846"/>
<dbReference type="OpenTargets" id="ENSG00000132518"/>
<dbReference type="Orphanet" id="75377">
    <property type="disease" value="Central areolar choroidal dystrophy"/>
</dbReference>
<dbReference type="Orphanet" id="1872">
    <property type="disease" value="Cone rod dystrophy"/>
</dbReference>
<dbReference type="Orphanet" id="65">
    <property type="disease" value="Leber congenital amaurosis"/>
</dbReference>
<dbReference type="PharmGKB" id="PA187"/>
<dbReference type="VEuPathDB" id="HostDB:ENSG00000132518"/>
<dbReference type="eggNOG" id="KOG1023">
    <property type="taxonomic scope" value="Eukaryota"/>
</dbReference>
<dbReference type="GeneTree" id="ENSGT00940000161326"/>
<dbReference type="HOGENOM" id="CLU_001072_1_0_1"/>
<dbReference type="InParanoid" id="Q02846"/>
<dbReference type="OMA" id="NIGVYEG"/>
<dbReference type="OrthoDB" id="1890790at2759"/>
<dbReference type="PAN-GO" id="Q02846">
    <property type="GO annotations" value="5 GO annotations based on evolutionary models"/>
</dbReference>
<dbReference type="PhylomeDB" id="Q02846"/>
<dbReference type="TreeFam" id="TF106338"/>
<dbReference type="BRENDA" id="4.6.1.2">
    <property type="organism ID" value="2681"/>
</dbReference>
<dbReference type="PathwayCommons" id="Q02846"/>
<dbReference type="Reactome" id="R-HSA-2514859">
    <property type="pathway name" value="Inactivation, recovery and regulation of the phototransduction cascade"/>
</dbReference>
<dbReference type="SignaLink" id="Q02846"/>
<dbReference type="BioGRID-ORCS" id="3000">
    <property type="hits" value="12 hits in 1184 CRISPR screens"/>
</dbReference>
<dbReference type="GenomeRNAi" id="3000"/>
<dbReference type="Pharos" id="Q02846">
    <property type="development level" value="Tbio"/>
</dbReference>
<dbReference type="PRO" id="PR:Q02846"/>
<dbReference type="Proteomes" id="UP000005640">
    <property type="component" value="Chromosome 17"/>
</dbReference>
<dbReference type="RNAct" id="Q02846">
    <property type="molecule type" value="protein"/>
</dbReference>
<dbReference type="Bgee" id="ENSG00000132518">
    <property type="expression patterns" value="Expressed in esophagus mucosa and 91 other cell types or tissues"/>
</dbReference>
<dbReference type="GO" id="GO:0005789">
    <property type="term" value="C:endoplasmic reticulum membrane"/>
    <property type="evidence" value="ECO:0000314"/>
    <property type="project" value="UniProtKB"/>
</dbReference>
<dbReference type="GO" id="GO:0005640">
    <property type="term" value="C:nuclear outer membrane"/>
    <property type="evidence" value="ECO:0000304"/>
    <property type="project" value="ProtInc"/>
</dbReference>
<dbReference type="GO" id="GO:0097381">
    <property type="term" value="C:photoreceptor disc membrane"/>
    <property type="evidence" value="ECO:0000304"/>
    <property type="project" value="Reactome"/>
</dbReference>
<dbReference type="GO" id="GO:0001750">
    <property type="term" value="C:photoreceptor outer segment"/>
    <property type="evidence" value="ECO:0000314"/>
    <property type="project" value="UniProtKB"/>
</dbReference>
<dbReference type="GO" id="GO:0042622">
    <property type="term" value="C:photoreceptor outer segment membrane"/>
    <property type="evidence" value="ECO:0007669"/>
    <property type="project" value="Ensembl"/>
</dbReference>
<dbReference type="GO" id="GO:0005886">
    <property type="term" value="C:plasma membrane"/>
    <property type="evidence" value="ECO:0000250"/>
    <property type="project" value="UniProtKB"/>
</dbReference>
<dbReference type="GO" id="GO:0005524">
    <property type="term" value="F:ATP binding"/>
    <property type="evidence" value="ECO:0007669"/>
    <property type="project" value="InterPro"/>
</dbReference>
<dbReference type="GO" id="GO:0005525">
    <property type="term" value="F:GTP binding"/>
    <property type="evidence" value="ECO:0007669"/>
    <property type="project" value="UniProtKB-KW"/>
</dbReference>
<dbReference type="GO" id="GO:0004383">
    <property type="term" value="F:guanylate cyclase activity"/>
    <property type="evidence" value="ECO:0000314"/>
    <property type="project" value="UniProtKB"/>
</dbReference>
<dbReference type="GO" id="GO:0001653">
    <property type="term" value="F:peptide receptor activity"/>
    <property type="evidence" value="ECO:0000318"/>
    <property type="project" value="GO_Central"/>
</dbReference>
<dbReference type="GO" id="GO:0042803">
    <property type="term" value="F:protein homodimerization activity"/>
    <property type="evidence" value="ECO:0000250"/>
    <property type="project" value="UniProtKB"/>
</dbReference>
<dbReference type="GO" id="GO:0004672">
    <property type="term" value="F:protein kinase activity"/>
    <property type="evidence" value="ECO:0007669"/>
    <property type="project" value="InterPro"/>
</dbReference>
<dbReference type="GO" id="GO:0044877">
    <property type="term" value="F:protein-containing complex binding"/>
    <property type="evidence" value="ECO:0007669"/>
    <property type="project" value="Ensembl"/>
</dbReference>
<dbReference type="GO" id="GO:0038023">
    <property type="term" value="F:signaling receptor activity"/>
    <property type="evidence" value="ECO:0000304"/>
    <property type="project" value="ProtInc"/>
</dbReference>
<dbReference type="GO" id="GO:0006182">
    <property type="term" value="P:cGMP biosynthetic process"/>
    <property type="evidence" value="ECO:0000318"/>
    <property type="project" value="GO_Central"/>
</dbReference>
<dbReference type="GO" id="GO:0019934">
    <property type="term" value="P:cGMP-mediated signaling"/>
    <property type="evidence" value="ECO:0007669"/>
    <property type="project" value="Ensembl"/>
</dbReference>
<dbReference type="GO" id="GO:0007168">
    <property type="term" value="P:receptor guanylyl cyclase signaling pathway"/>
    <property type="evidence" value="ECO:0000318"/>
    <property type="project" value="GO_Central"/>
</dbReference>
<dbReference type="GO" id="GO:0022400">
    <property type="term" value="P:regulation of opsin-mediated signaling pathway"/>
    <property type="evidence" value="ECO:0000304"/>
    <property type="project" value="Reactome"/>
</dbReference>
<dbReference type="GO" id="GO:0007601">
    <property type="term" value="P:visual perception"/>
    <property type="evidence" value="ECO:0000304"/>
    <property type="project" value="ProtInc"/>
</dbReference>
<dbReference type="CDD" id="cd07302">
    <property type="entry name" value="CHD"/>
    <property type="match status" value="1"/>
</dbReference>
<dbReference type="CDD" id="cd06371">
    <property type="entry name" value="PBP1_sensory_GC_DEF-like"/>
    <property type="match status" value="1"/>
</dbReference>
<dbReference type="CDD" id="cd14043">
    <property type="entry name" value="PK_GC-2D"/>
    <property type="match status" value="1"/>
</dbReference>
<dbReference type="FunFam" id="1.10.510.10:FF:000507">
    <property type="entry name" value="Guanylate cyclase"/>
    <property type="match status" value="1"/>
</dbReference>
<dbReference type="FunFam" id="3.30.70.1230:FF:000013">
    <property type="entry name" value="Guanylate cyclase"/>
    <property type="match status" value="1"/>
</dbReference>
<dbReference type="FunFam" id="3.40.50.2300:FF:000114">
    <property type="entry name" value="Guanylate cyclase"/>
    <property type="match status" value="1"/>
</dbReference>
<dbReference type="Gene3D" id="3.40.50.2300">
    <property type="match status" value="1"/>
</dbReference>
<dbReference type="Gene3D" id="3.30.70.1230">
    <property type="entry name" value="Nucleotide cyclase"/>
    <property type="match status" value="1"/>
</dbReference>
<dbReference type="Gene3D" id="1.10.510.10">
    <property type="entry name" value="Transferase(Phosphotransferase) domain 1"/>
    <property type="match status" value="1"/>
</dbReference>
<dbReference type="InterPro" id="IPR001054">
    <property type="entry name" value="A/G_cyclase"/>
</dbReference>
<dbReference type="InterPro" id="IPR018297">
    <property type="entry name" value="A/G_cyclase_CS"/>
</dbReference>
<dbReference type="InterPro" id="IPR001828">
    <property type="entry name" value="ANF_lig-bd_rcpt"/>
</dbReference>
<dbReference type="InterPro" id="IPR050401">
    <property type="entry name" value="Cyclic_nucleotide_synthase"/>
</dbReference>
<dbReference type="InterPro" id="IPR011645">
    <property type="entry name" value="HNOB_dom_associated"/>
</dbReference>
<dbReference type="InterPro" id="IPR011009">
    <property type="entry name" value="Kinase-like_dom_sf"/>
</dbReference>
<dbReference type="InterPro" id="IPR029787">
    <property type="entry name" value="Nucleotide_cyclase"/>
</dbReference>
<dbReference type="InterPro" id="IPR028082">
    <property type="entry name" value="Peripla_BP_I"/>
</dbReference>
<dbReference type="InterPro" id="IPR000719">
    <property type="entry name" value="Prot_kinase_dom"/>
</dbReference>
<dbReference type="InterPro" id="IPR001245">
    <property type="entry name" value="Ser-Thr/Tyr_kinase_cat_dom"/>
</dbReference>
<dbReference type="PANTHER" id="PTHR11920">
    <property type="entry name" value="GUANYLYL CYCLASE"/>
    <property type="match status" value="1"/>
</dbReference>
<dbReference type="PANTHER" id="PTHR11920:SF228">
    <property type="entry name" value="RETINAL GUANYLYL CYCLASE 1"/>
    <property type="match status" value="1"/>
</dbReference>
<dbReference type="Pfam" id="PF01094">
    <property type="entry name" value="ANF_receptor"/>
    <property type="match status" value="1"/>
</dbReference>
<dbReference type="Pfam" id="PF00211">
    <property type="entry name" value="Guanylate_cyc"/>
    <property type="match status" value="1"/>
</dbReference>
<dbReference type="Pfam" id="PF07701">
    <property type="entry name" value="HNOBA"/>
    <property type="match status" value="1"/>
</dbReference>
<dbReference type="Pfam" id="PF07714">
    <property type="entry name" value="PK_Tyr_Ser-Thr"/>
    <property type="match status" value="1"/>
</dbReference>
<dbReference type="SMART" id="SM00044">
    <property type="entry name" value="CYCc"/>
    <property type="match status" value="1"/>
</dbReference>
<dbReference type="SUPFAM" id="SSF55073">
    <property type="entry name" value="Nucleotide cyclase"/>
    <property type="match status" value="1"/>
</dbReference>
<dbReference type="SUPFAM" id="SSF53822">
    <property type="entry name" value="Periplasmic binding protein-like I"/>
    <property type="match status" value="1"/>
</dbReference>
<dbReference type="SUPFAM" id="SSF56112">
    <property type="entry name" value="Protein kinase-like (PK-like)"/>
    <property type="match status" value="1"/>
</dbReference>
<dbReference type="PROSITE" id="PS00452">
    <property type="entry name" value="GUANYLATE_CYCLASE_1"/>
    <property type="match status" value="1"/>
</dbReference>
<dbReference type="PROSITE" id="PS50125">
    <property type="entry name" value="GUANYLATE_CYCLASE_2"/>
    <property type="match status" value="1"/>
</dbReference>
<dbReference type="PROSITE" id="PS50011">
    <property type="entry name" value="PROTEIN_KINASE_DOM"/>
    <property type="match status" value="1"/>
</dbReference>
<organism>
    <name type="scientific">Homo sapiens</name>
    <name type="common">Human</name>
    <dbReference type="NCBI Taxonomy" id="9606"/>
    <lineage>
        <taxon>Eukaryota</taxon>
        <taxon>Metazoa</taxon>
        <taxon>Chordata</taxon>
        <taxon>Craniata</taxon>
        <taxon>Vertebrata</taxon>
        <taxon>Euteleostomi</taxon>
        <taxon>Mammalia</taxon>
        <taxon>Eutheria</taxon>
        <taxon>Euarchontoglires</taxon>
        <taxon>Primates</taxon>
        <taxon>Haplorrhini</taxon>
        <taxon>Catarrhini</taxon>
        <taxon>Hominidae</taxon>
        <taxon>Homo</taxon>
    </lineage>
</organism>
<feature type="signal peptide" evidence="3">
    <location>
        <begin position="1"/>
        <end position="51"/>
    </location>
</feature>
<feature type="chain" id="PRO_0000012381" description="Retinal guanylyl cyclase 1">
    <location>
        <begin position="52"/>
        <end position="1103"/>
    </location>
</feature>
<feature type="topological domain" description="Extracellular" evidence="4">
    <location>
        <begin position="52"/>
        <end position="462"/>
    </location>
</feature>
<feature type="transmembrane region" description="Helical" evidence="4">
    <location>
        <begin position="463"/>
        <end position="487"/>
    </location>
</feature>
<feature type="topological domain" description="Cytoplasmic" evidence="4">
    <location>
        <begin position="488"/>
        <end position="1103"/>
    </location>
</feature>
<feature type="domain" description="Protein kinase" evidence="6">
    <location>
        <begin position="525"/>
        <end position="808"/>
    </location>
</feature>
<feature type="domain" description="Guanylate cyclase" evidence="5">
    <location>
        <begin position="880"/>
        <end position="1010"/>
    </location>
</feature>
<feature type="region of interest" description="Disordered" evidence="7">
    <location>
        <begin position="1065"/>
        <end position="1103"/>
    </location>
</feature>
<feature type="glycosylation site" description="N-linked (GlcNAc...) asparagine" evidence="4">
    <location>
        <position position="297"/>
    </location>
</feature>
<feature type="disulfide bond" description="Interchain" evidence="40">
    <location>
        <position position="449"/>
    </location>
</feature>
<feature type="disulfide bond" description="Interchain" evidence="40">
    <location>
        <position position="457"/>
    </location>
</feature>
<feature type="sequence variant" id="VAR_067168" description="In dbSNP:rs9905402." evidence="21">
    <original>W</original>
    <variation>R</variation>
    <location>
        <position position="21"/>
    </location>
</feature>
<feature type="sequence variant" id="VAR_003435" description="In LCA1; uncertain significance; dbSNP:rs61749665." evidence="21 33">
    <original>A</original>
    <variation>S</variation>
    <location>
        <position position="52"/>
    </location>
</feature>
<feature type="sequence variant" id="VAR_067169" description="In LCA1; dbSNP:rs201414567." evidence="21">
    <original>T</original>
    <variation>M</variation>
    <location>
        <position position="55"/>
    </location>
</feature>
<feature type="sequence variant" id="VAR_067170" description="In LCA1." evidence="21">
    <original>E</original>
    <variation>V</variation>
    <location>
        <position position="103"/>
    </location>
</feature>
<feature type="sequence variant" id="VAR_023770" description="In LCA1; does not affect basal guanylate cyclase activity; reduces GUCA1A-induced guanylate cyclase activity; dbSNP:rs61749669." evidence="8 12">
    <original>C</original>
    <variation>Y</variation>
    <location>
        <position position="105"/>
    </location>
</feature>
<feature type="sequence variant" id="VAR_067171" description="In LCA1; dbSNP:rs61749673." evidence="21">
    <original>T</original>
    <variation>M</variation>
    <location>
        <position position="312"/>
    </location>
</feature>
<feature type="sequence variant" id="VAR_023771" description="In LCA1; does not affect basal guanylate cyclase activity; reduces GUCA1A-induced guanylate cyclase activity; dbSNP:rs61749675." evidence="8 12">
    <original>L</original>
    <variation>P</variation>
    <location>
        <position position="325"/>
    </location>
</feature>
<feature type="sequence variant" id="VAR_067172" description="Found in a patient with LCA1; dbSNP:rs61749675." evidence="15">
    <original>L</original>
    <variation>R</variation>
    <location>
        <position position="325"/>
    </location>
</feature>
<feature type="sequence variant" id="VAR_042229" description="In dbSNP:rs56280231." evidence="14">
    <original>A</original>
    <variation>V</variation>
    <location>
        <position position="328"/>
    </location>
</feature>
<feature type="sequence variant" id="VAR_049254" description="In dbSNP:rs34596269.">
    <original>R</original>
    <variation>S</variation>
    <location>
        <position position="331"/>
    </location>
</feature>
<feature type="sequence variant" id="VAR_009129" description="In LCA1; dbSNP:rs61749677.">
    <original>A</original>
    <variation>S</variation>
    <location>
        <position position="362"/>
    </location>
</feature>
<feature type="sequence variant" id="VAR_067173" description="In LCA1." evidence="21">
    <original>LD</original>
    <variation>PN</variation>
    <location>
        <begin position="405"/>
        <end position="406"/>
    </location>
</feature>
<feature type="sequence variant" id="VAR_042230" description="In a metastatic melanoma sample; somatic mutation; dbSNP:rs1451501407." evidence="14">
    <original>G</original>
    <variation>D</variation>
    <location>
        <position position="431"/>
    </location>
</feature>
<feature type="sequence variant" id="VAR_067174" description="In LCA1; dbSNP:rs565948960." evidence="21">
    <original>R</original>
    <variation>C</variation>
    <location>
        <position position="438"/>
    </location>
</feature>
<feature type="sequence variant" id="VAR_042231" description="In dbSNP:rs746002871." evidence="14">
    <original>V</original>
    <variation>M</variation>
    <location>
        <position position="507"/>
    </location>
</feature>
<feature type="sequence variant" id="VAR_009131" description="In LCA1; loss of activity; dbSNP:rs61749755." evidence="37">
    <original>F</original>
    <variation>S</variation>
    <location>
        <position position="565"/>
    </location>
</feature>
<feature type="sequence variant" id="VAR_009130" description="In LCA1; dbSNP:rs61749756." evidence="13">
    <original>I</original>
    <variation>V</variation>
    <location>
        <position position="573"/>
    </location>
</feature>
<feature type="sequence variant" id="VAR_049255" description="In dbSNP:rs770740012.">
    <original>R</original>
    <variation>W</variation>
    <location>
        <position position="602"/>
    </location>
</feature>
<feature type="sequence variant" id="VAR_067175" description="In LCA1." evidence="21">
    <original>W</original>
    <variation>L</variation>
    <location>
        <position position="640"/>
    </location>
</feature>
<feature type="sequence variant" id="VAR_067176" description="In LCA1; dbSNP:rs61750162." evidence="21">
    <original>R</original>
    <variation>Q</variation>
    <location>
        <position position="660"/>
    </location>
</feature>
<feature type="sequence variant" id="VAR_042232" description="In dbSNP:rs35146471." evidence="14">
    <original>A</original>
    <variation>E</variation>
    <location>
        <position position="693"/>
    </location>
</feature>
<feature type="sequence variant" id="VAR_009132" description="In dbSNP:rs34598902." evidence="14 15 21">
    <original>P</original>
    <variation>S</variation>
    <location>
        <position position="701"/>
    </location>
</feature>
<feature type="sequence variant" id="VAR_082624" description="In LCA1; loss of basal and GUCA1A-induced guanylate cyclase activity; does not affect endoplasmic reticulum membrane localization; dbSNP:rs781725943." evidence="29 31">
    <original>A</original>
    <variation>V</variation>
    <location>
        <position position="710"/>
    </location>
</feature>
<feature type="sequence variant" id="VAR_049256" description="In dbSNP:rs34331388.">
    <original>R</original>
    <variation>W</variation>
    <location>
        <position position="722"/>
    </location>
</feature>
<feature type="sequence variant" id="VAR_067177" description="In LCA1." evidence="21">
    <original>D</original>
    <variation>H</variation>
    <location>
        <position position="728"/>
    </location>
</feature>
<feature type="sequence variant" id="VAR_067178" description="In LCA1; requires 2 nucleotide substitutions." evidence="21">
    <original>I</original>
    <variation>A</variation>
    <location>
        <position position="734"/>
    </location>
</feature>
<feature type="sequence variant" id="VAR_067179" description="In LCA1 and CSNB1I; dbSNP:rs61750168." evidence="15 21 30">
    <original>R</original>
    <variation>W</variation>
    <location>
        <position position="768"/>
    </location>
</feature>
<feature type="sequence variant" id="VAR_009133" description="In dbSNP:rs8069344." evidence="14">
    <original>L</original>
    <variation>H</variation>
    <location>
        <position position="782"/>
    </location>
</feature>
<feature type="sequence variant" id="VAR_067180" description="In LCA1; dbSNP:rs375010731." evidence="21">
    <original>M</original>
    <variation>R</variation>
    <location>
        <position position="784"/>
    </location>
</feature>
<feature type="sequence variant" id="VAR_067181" description="In LCA1; dbSNP:rs61750171." evidence="15">
    <original>R</original>
    <variation>Q</variation>
    <location>
        <position position="795"/>
    </location>
</feature>
<feature type="sequence variant" id="VAR_003438" description="In CORD6." evidence="36">
    <original>ERT</original>
    <variation>DCM</variation>
    <location>
        <begin position="837"/>
        <end position="839"/>
    </location>
</feature>
<feature type="sequence variant" id="VAR_003436" description="In CORD6; dbSNP:rs28933695." evidence="35">
    <original>E</original>
    <variation>D</variation>
    <location>
        <position position="837"/>
    </location>
</feature>
<feature type="sequence variant" id="VAR_003437" description="In CORD6; dbSNP:rs61750172." evidence="10 17 27 35">
    <original>R</original>
    <variation>C</variation>
    <location>
        <position position="838"/>
    </location>
</feature>
<feature type="sequence variant" id="VAR_071605" description="In CORD6; dbSNP:rs61750172." evidence="17">
    <original>R</original>
    <variation>G</variation>
    <location>
        <position position="838"/>
    </location>
</feature>
<feature type="sequence variant" id="VAR_015373" description="In CORD6; dbSNP:rs61750173." evidence="10 17 23 26">
    <original>R</original>
    <variation>H</variation>
    <location>
        <position position="838"/>
    </location>
</feature>
<feature type="sequence variant" id="VAR_071606" description="In CORD6; dbSNP:rs61750173." evidence="20">
    <original>R</original>
    <variation>P</variation>
    <location>
        <position position="838"/>
    </location>
</feature>
<feature type="sequence variant" id="VAR_082625" description="In CORD6; decreases basal and GUCA1A-induced guanylate cyclase activity; inhibition by RD3 is less effective; does not affect endoplasmic reticulum membrane localization; dbSNP:rs1341592819." evidence="27 31">
    <original>E</original>
    <variation>K</variation>
    <location>
        <position position="841"/>
    </location>
</feature>
<feature type="sequence variant" id="VAR_082626" description="In CORD6; decreases basal and GUCA1A-induced guanylate cyclase activity; inhibition by RD3 is less effective; does not affect endoplasmic reticulum membrane localization; dbSNP:rs1598150539." evidence="27 31">
    <original>K</original>
    <variation>N</variation>
    <location>
        <position position="846"/>
    </location>
</feature>
<feature type="sequence variant" id="VAR_071607" description="In CORD6; dbSNP:rs2151803362." evidence="25">
    <original>T</original>
    <variation>A</variation>
    <location>
        <position position="849"/>
    </location>
</feature>
<feature type="sequence variant" id="VAR_009134" description="In LCA1; severely impairs basal and GUCA1A-induced guanylate cyclase activity; dbSNP:rs61750176." evidence="8 12">
    <original>P</original>
    <variation>S</variation>
    <location>
        <position position="858"/>
    </location>
</feature>
<feature type="sequence variant" id="VAR_082627" description="In CORD6; loss basal and GUCA1A-induced guanylate cyclase activity; does not affect endoplasmic reticulum membrane localization; dbSNP:rs1567961680." evidence="31">
    <original>P</original>
    <variation>R</variation>
    <location>
        <position position="873"/>
    </location>
</feature>
<feature type="sequence variant" id="VAR_082628" description="In LCA1; increases basal and GUCA1A-induced guanylate cyclase activity; inhibition by RD3 is less effective; does not affect endoplasmic reticulum membrane localization; dbSNP:rs1598150793." evidence="31">
    <original>V</original>
    <variation>L</variation>
    <location>
        <position position="902"/>
    </location>
</feature>
<feature type="sequence variant" id="VAR_080484" description="In CACD1; uncertain significance; dbSNP:rs1567961904." evidence="24">
    <original>V</original>
    <variation>A</variation>
    <location>
        <position position="933"/>
    </location>
</feature>
<feature type="sequence variant" id="VAR_071608" description="In CORD6; dbSNP:rs267606857." evidence="18">
    <original>I</original>
    <variation>T</variation>
    <location>
        <position position="949"/>
    </location>
</feature>
<feature type="sequence variant" id="VAR_009135" description="In LCA1; severely impairs basal and GUCA1A induced guanylate cyclase; dbSNP:rs61750182." evidence="9 12">
    <original>L</original>
    <variation>P</variation>
    <location>
        <position position="954"/>
    </location>
</feature>
<feature type="sequence variant" id="VAR_067182" description="In LCA1." evidence="21">
    <original>S</original>
    <variation>L</variation>
    <location>
        <position position="1007"/>
    </location>
</feature>
<feature type="sequence variant" id="VAR_067183" description="In LCA1.">
    <original>I</original>
    <variation>IGI</variation>
    <location>
        <position position="1027"/>
    </location>
</feature>
<feature type="mutagenesis site" description="Fails to become activated by GUCA1A and by GUCA1B. Does not affect the binding to RP3." evidence="28">
    <original>R</original>
    <variation>P</variation>
    <location>
        <position position="822"/>
    </location>
</feature>
<feature type="mutagenesis site" description="Fails to become activated by GUCA1A and by GUCA1B. Does not affect the binding to RP3." evidence="28">
    <original>M</original>
    <variation>R</variation>
    <location>
        <position position="823"/>
    </location>
</feature>
<feature type="mutagenesis site" description="Changes the substrate specificity from GTP to ATP." evidence="34">
    <original>E</original>
    <variation>K</variation>
    <location>
        <position position="925"/>
    </location>
</feature>
<feature type="mutagenesis site" description="Changes the substrate specificity from GTP to ATP." evidence="34">
    <original>C</original>
    <variation>D</variation>
    <location>
        <position position="997"/>
    </location>
</feature>
<evidence type="ECO:0000250" key="1">
    <source>
        <dbReference type="UniProtKB" id="P51840"/>
    </source>
</evidence>
<evidence type="ECO:0000250" key="2">
    <source>
        <dbReference type="UniProtKB" id="P52785"/>
    </source>
</evidence>
<evidence type="ECO:0000250" key="3">
    <source>
        <dbReference type="UniProtKB" id="P55203"/>
    </source>
</evidence>
<evidence type="ECO:0000255" key="4"/>
<evidence type="ECO:0000255" key="5">
    <source>
        <dbReference type="PROSITE-ProRule" id="PRU00099"/>
    </source>
</evidence>
<evidence type="ECO:0000255" key="6">
    <source>
        <dbReference type="PROSITE-ProRule" id="PRU00159"/>
    </source>
</evidence>
<evidence type="ECO:0000256" key="7">
    <source>
        <dbReference type="SAM" id="MobiDB-lite"/>
    </source>
</evidence>
<evidence type="ECO:0000269" key="8">
    <source>
    </source>
</evidence>
<evidence type="ECO:0000269" key="9">
    <source>
    </source>
</evidence>
<evidence type="ECO:0000269" key="10">
    <source>
    </source>
</evidence>
<evidence type="ECO:0000269" key="11">
    <source>
    </source>
</evidence>
<evidence type="ECO:0000269" key="12">
    <source>
    </source>
</evidence>
<evidence type="ECO:0000269" key="13">
    <source>
    </source>
</evidence>
<evidence type="ECO:0000269" key="14">
    <source>
    </source>
</evidence>
<evidence type="ECO:0000269" key="15">
    <source>
    </source>
</evidence>
<evidence type="ECO:0000269" key="16">
    <source>
    </source>
</evidence>
<evidence type="ECO:0000269" key="17">
    <source>
    </source>
</evidence>
<evidence type="ECO:0000269" key="18">
    <source>
    </source>
</evidence>
<evidence type="ECO:0000269" key="19">
    <source>
    </source>
</evidence>
<evidence type="ECO:0000269" key="20">
    <source>
    </source>
</evidence>
<evidence type="ECO:0000269" key="21">
    <source>
    </source>
</evidence>
<evidence type="ECO:0000269" key="22">
    <source>
    </source>
</evidence>
<evidence type="ECO:0000269" key="23">
    <source>
    </source>
</evidence>
<evidence type="ECO:0000269" key="24">
    <source>
    </source>
</evidence>
<evidence type="ECO:0000269" key="25">
    <source>
    </source>
</evidence>
<evidence type="ECO:0000269" key="26">
    <source>
    </source>
</evidence>
<evidence type="ECO:0000269" key="27">
    <source>
    </source>
</evidence>
<evidence type="ECO:0000269" key="28">
    <source>
    </source>
</evidence>
<evidence type="ECO:0000269" key="29">
    <source>
    </source>
</evidence>
<evidence type="ECO:0000269" key="30">
    <source>
    </source>
</evidence>
<evidence type="ECO:0000269" key="31">
    <source>
    </source>
</evidence>
<evidence type="ECO:0000269" key="32">
    <source>
    </source>
</evidence>
<evidence type="ECO:0000269" key="33">
    <source>
    </source>
</evidence>
<evidence type="ECO:0000269" key="34">
    <source>
    </source>
</evidence>
<evidence type="ECO:0000269" key="35">
    <source>
    </source>
</evidence>
<evidence type="ECO:0000269" key="36">
    <source>
    </source>
</evidence>
<evidence type="ECO:0000269" key="37">
    <source>
    </source>
</evidence>
<evidence type="ECO:0000303" key="38">
    <source>
    </source>
</evidence>
<evidence type="ECO:0000303" key="39">
    <source>
    </source>
</evidence>
<evidence type="ECO:0000305" key="40"/>
<sequence length="1103" mass="120059">MTACARRAGGLPDPGLCGPAWWAPSLPRLPRALPRLPLLLLLLLLQPPALSAVFTVGVLGPWACDPIFSRARPDLAARLAAARLNRDPGLAGGPRFEVALLPEPCRTPGSLGAVSSALARVSGLVGPVNPAACRPAELLAEEAGIALVPWGCPWTQAEGTTAPAVTPAADALYALLRAFGWARVALVTAPQDLWVEAGRSLSTALRARGLPVASVTSMEPLDLSGAREALRKVRDGPRVTAVIMVMHSVLLGGEEQRYLLEAAEELGLTDGSLVFLPFDTIHYALSPGPEALAALANSSQLRRAHDAVLTLTRHCPSEGSVLDSLRRAQERRELPSDLNLQQVSPLFGTIYDAVFLLARGVAEARAAAGGRWVSGAAVARHIRDAQVPGFCGDLGGDEEPPFVLLDTDAAGDRLFATYMLDPARGSFLSAGTRMHFPRGGSAPGPDPSCWFDPNNICGGGLEPGLVFLGFLLVVGMGLAGAFLAHYVRHRLLHMQMVSGPNKIILTVDDITFLHPHGGTSRKVAQGSRSSLGARSMSDIRSGPSQHLDSPNIGVYEGDRVWLKKFPGDQHIAIRPATKTAFSKLQELRHENVALYLGLFLARGAEGPAALWEGNLAVVSEHCTRGSLQDLLAQREIKLDWMFKSSLLLDLIKGIRYLHHRGVAHGRLKSRNCIVDGRFVLKITDHGHGRLLEAQKVLPEPPRAEDQLWTAPELLRDPALERRGTLAGDVFSLAIIMQEVVCRSAPYAMLELTPEEVVQRVRSPPPLCRPLVSMDQAPVECILLMKQCWAEQPELRPSMDHTFDLFKNINKGRKTNIIDSMLRMLEQYSSNLEDLIRERTEELELEKQKTDRLLTQMLPPSVAEALKTGTPVEPEYFEQVTLYFSDIVGFTTISAMSEPIEVVDLLNDLYTLFDAIIGSHDVYKVETIGDAYMVASGLPQRNGQRHAAEIANMSLDILSAVGTFRMRHMPEVPVRIRIGLHSGPCVAGVVGLTMPRYCLFGDTVNTASRMESTGLPYRIHVNLSTVGILRALDSGYQVELRGRTELKGKGAEDTFWLVGRRGFNKPIPKPPDLQPGSSNHGISLQEIPPERRRKLEKARPGQFS</sequence>
<proteinExistence type="evidence at protein level"/>
<accession>Q02846</accession>
<accession>Q6LEA7</accession>
<reference key="1">
    <citation type="journal article" date="1992" name="Neuron">
        <title>Molecular cloning of a retina-specific membrane guanylyl cyclase.</title>
        <authorList>
            <person name="Shyjan A.W."/>
            <person name="de Sauvage F.J."/>
            <person name="Gillett N.A."/>
            <person name="Goeddel D.V."/>
            <person name="Lowe D.G."/>
        </authorList>
    </citation>
    <scope>NUCLEOTIDE SEQUENCE [MRNA]</scope>
    <source>
        <tissue>Retina</tissue>
    </source>
</reference>
<reference key="2">
    <citation type="submission" date="1995-01" db="EMBL/GenBank/DDBJ databases">
        <authorList>
            <person name="Lowe D.G."/>
        </authorList>
    </citation>
    <scope>SEQUENCE REVISION</scope>
</reference>
<reference key="3">
    <citation type="submission" date="1997-12" db="EMBL/GenBank/DDBJ databases">
        <authorList>
            <person name="Perrault I."/>
        </authorList>
    </citation>
    <scope>NUCLEOTIDE SEQUENCE [GENOMIC DNA]</scope>
</reference>
<reference key="4">
    <citation type="journal article" date="1994" name="Genomics">
        <title>Human retinal guanylate cyclase (GUC2D) maps to chromosome 17p13.1.</title>
        <authorList>
            <person name="Oliveira L."/>
            <person name="Miniou P."/>
            <person name="Viegas-Pequignot E."/>
            <person name="Rozet J.-M."/>
            <person name="Dollfus H."/>
            <person name="Pittler S.J."/>
        </authorList>
    </citation>
    <scope>NUCLEOTIDE SEQUENCE [GENOMIC DNA] OF 1009-1088</scope>
</reference>
<reference key="5">
    <citation type="journal article" date="1994" name="Neuron">
        <title>The human photoreceptor membrane guanylyl cyclase, RetGC, is present in outer segments and is regulated by calcium and a soluble activator.</title>
        <authorList>
            <person name="Dizhoor A.M."/>
            <person name="Lowe D.G."/>
            <person name="Olshevskaya E.V."/>
            <person name="Laura R.P."/>
            <person name="Hurley J.B."/>
        </authorList>
    </citation>
    <scope>SUBCELLULAR LOCATION</scope>
    <scope>TISSUE SPECIFICITY</scope>
    <scope>CATALYTIC ACTIVITY</scope>
</reference>
<reference key="6">
    <citation type="journal article" date="1998" name="Proc. Natl. Acad. Sci. U.S.A.">
        <title>Two amino acid substitutions convert a guanylyl cyclase, RetGC-1, into an adenylyl cyclase.</title>
        <authorList>
            <person name="Tucker C.L."/>
            <person name="Hurley J.H."/>
            <person name="Miller T.R."/>
            <person name="Hurley J.B."/>
        </authorList>
    </citation>
    <scope>MUTAGENESIS OF GLU-925 AND CYS-997</scope>
    <scope>CATALYTIC ACTIVITY</scope>
    <scope>FUNCTION</scope>
</reference>
<reference key="7">
    <citation type="journal article" date="1997" name="Proc. Natl. Acad. Sci. U.S.A.">
        <title>Catalytic mechanism of the adenylyl and guanylyl cyclases: modeling and mutational analysis.</title>
        <authorList>
            <person name="Liu Y."/>
            <person name="Ruoho A.E."/>
            <person name="Rao V.D."/>
            <person name="Hurley J.H."/>
        </authorList>
    </citation>
    <scope>3D-STRUCTURE MODELING OF 871-1028</scope>
</reference>
<reference key="8">
    <citation type="journal article" date="1996" name="Nat. Genet.">
        <title>Retinal-specific guanylate cyclase gene mutations in Leber's congenital amaurosis.</title>
        <authorList>
            <person name="Perrault I."/>
            <person name="Rozet J.-M."/>
            <person name="Calvas P."/>
            <person name="Gerber S."/>
            <person name="Camuzat A."/>
            <person name="Dollfus H."/>
            <person name="Chatelin S."/>
            <person name="Souied E."/>
            <person name="Ghazi I."/>
            <person name="Leowski C."/>
            <person name="Bonnemaison M."/>
            <person name="le Paslier D."/>
            <person name="Frezal J."/>
            <person name="Dufier J.-L."/>
            <person name="Pittler S."/>
            <person name="Munnich A."/>
            <person name="Kaplan J."/>
        </authorList>
    </citation>
    <scope>VARIANT LCA1 SER-52</scope>
</reference>
<reference key="9">
    <citation type="journal article" date="1998" name="Am. J. Hum. Genet.">
        <title>A retGC-1 mutation in autosomal dominant cone-rod dystrophy.</title>
        <authorList>
            <person name="Perrault I."/>
            <person name="Rozet J.-M."/>
            <person name="Gerber S."/>
            <person name="Kelsell R.E."/>
            <person name="Souied E."/>
            <person name="Cabot A."/>
            <person name="Hunt D.M."/>
            <person name="Munnich A."/>
            <person name="Kaplan J."/>
        </authorList>
    </citation>
    <scope>VARIANT CORD6 837-GLU--THR-839 DELINS ASP-CYS-MET</scope>
</reference>
<reference key="10">
    <citation type="journal article" date="1998" name="Hum. Mol. Genet.">
        <title>Mutations in the retinal guanylate cyclase (RETGC-1) gene in dominant cone-rod dystrophy.</title>
        <authorList>
            <person name="Kelsell R.E."/>
            <person name="Gregory-Evans K."/>
            <person name="Payne A.M."/>
            <person name="Perrault I."/>
            <person name="Kaplan J."/>
            <person name="Yang R.-B."/>
            <person name="Garbers D.L."/>
            <person name="Bird A.C."/>
            <person name="Moore A.T."/>
            <person name="Hunt D.M."/>
        </authorList>
    </citation>
    <scope>VARIANTS CORD6 ASP-837 AND CYS-838</scope>
</reference>
<reference key="11">
    <citation type="journal article" date="1999" name="Biochemistry">
        <title>Functional consequences of a rod outer segment membrane guanylate cyclase (ROS-GC1) gene mutation linked with Leber's congenital amaurosis.</title>
        <authorList>
            <person name="Duda T."/>
            <person name="Venkataraman V."/>
            <person name="Goraczniak R."/>
            <person name="Lange C."/>
            <person name="Koch K.-W."/>
            <person name="Sharma R.K."/>
        </authorList>
    </citation>
    <scope>CHARACTERIZATION OF VARIANT LCA1 SER-565</scope>
</reference>
<reference key="12">
    <citation type="journal article" date="2000" name="Ophthalmic Genet.">
        <title>Mutational analysis and clinical correlation in Leber congenital amaurosis.</title>
        <authorList>
            <person name="Dharmaraj S.R."/>
            <person name="Silva E.R."/>
            <person name="Pina A.-L."/>
            <person name="Li Y.Y."/>
            <person name="Yang J.M."/>
            <person name="Carter C.R."/>
            <person name="Loyer M.K."/>
            <person name="El-Hilali H.K."/>
            <person name="Traboulsi E.K."/>
            <person name="Sundin O.K."/>
            <person name="Zhu D.K."/>
            <person name="Koenekoop R.K."/>
            <person name="Maumenee I.H."/>
        </authorList>
    </citation>
    <scope>VARIANTS LCA1 TYR-105; PRO-325 AND SER-858</scope>
</reference>
<reference key="13">
    <citation type="journal article" date="2002" name="Arch. Ophthalmol.">
        <title>Electroretinographic abnormalities in parents of patients with Leber congenital amaurosis who have heterozygous GUCY2D mutations.</title>
        <authorList>
            <person name="Koenekoop R.K."/>
            <person name="Fishman G.A."/>
            <person name="Iannaccone A."/>
            <person name="Ezzeldin H."/>
            <person name="Ciccarelli M.L."/>
            <person name="Baldi A."/>
            <person name="Sunness J.S."/>
            <person name="Lotery A.J."/>
            <person name="Jablonski M.M."/>
            <person name="Pittler S.J."/>
            <person name="Maumenee I."/>
        </authorList>
    </citation>
    <scope>VARIANT LCA1 PRO-954</scope>
</reference>
<reference key="14">
    <citation type="journal article" date="2003" name="Hum. Mutat.">
        <title>Identification of GUCY2D gene mutations in CORD5 families and evidence of incomplete penetrance.</title>
        <authorList>
            <person name="Udar N."/>
            <person name="Yelchits S."/>
            <person name="Chalukya M."/>
            <person name="Yellore V."/>
            <person name="Nusinowitz S."/>
            <person name="Silva-Garcia R."/>
            <person name="Vrabec T."/>
            <person name="Hussles Maumenee I."/>
            <person name="Donoso L."/>
            <person name="Small K.W."/>
        </authorList>
    </citation>
    <scope>VARIANTS CORD6 CYS-838 AND HIS-838</scope>
    <scope>DISCUSSION OF PHENOTYPIC VARIABILITY</scope>
</reference>
<reference key="15">
    <citation type="journal article" date="2004" name="Invest. Ophthalmol. Vis. Sci.">
        <title>Novel complex GUCY2D mutation in Japanese family with cone-rod dystrophy.</title>
        <authorList>
            <person name="Ito S."/>
            <person name="Nakamura M."/>
            <person name="Nuno Y."/>
            <person name="Ohnishi Y."/>
            <person name="Nishida T."/>
            <person name="Miyake Y."/>
        </authorList>
    </citation>
    <scope>INVOLVEMENT IN CORD6</scope>
</reference>
<reference key="16">
    <citation type="journal article" date="2004" name="Mol. Vis.">
        <title>Functional analyses of mutant recessive GUCY2D alleles identified in Leber congenital amaurosis patients: protein domain comparisons and dominant negative effects.</title>
        <authorList>
            <person name="Tucker C.L."/>
            <person name="Ramamurthy V."/>
            <person name="Pina A.-L."/>
            <person name="Loyer M."/>
            <person name="Dharmaraj S."/>
            <person name="Li Y."/>
            <person name="Maumenee I.H."/>
            <person name="Hurley J.B."/>
            <person name="Koenekoop R.K."/>
        </authorList>
    </citation>
    <scope>CHARACTERIZATION OF VARIANTS LCA1 TYR-105; PRO-325; SER-858 AND PRO-954</scope>
    <scope>CATALYTIC ACTIVITY</scope>
    <scope>FUNCTION</scope>
</reference>
<reference key="17">
    <citation type="journal article" date="2005" name="Invest. Ophthalmol. Vis. Sci.">
        <title>Genotyping microarray (disease chip) for Leber congenital amaurosis: detection of modifier alleles.</title>
        <authorList>
            <person name="Zernant J."/>
            <person name="Kulm M."/>
            <person name="Dharmaraj S."/>
            <person name="den Hollander A.I."/>
            <person name="Perrault I."/>
            <person name="Preising M.N."/>
            <person name="Lorenz B."/>
            <person name="Kaplan J."/>
            <person name="Cremers F.P."/>
            <person name="Maumenee I."/>
            <person name="Koenekoop R.K."/>
            <person name="Allikmets R."/>
        </authorList>
    </citation>
    <scope>POSSIBLE INVOLVEMENT OF VARIANT SER-701 IN LEBER CONGENITAL AMAUROSIS</scope>
    <scope>VARIANT LCA1 VAL-573</scope>
</reference>
<reference key="18">
    <citation type="journal article" date="2007" name="Invest. Ophthalmol. Vis. Sci.">
        <title>Clinical and molecular genetics of Leber's congenital amaurosis: a multicenter study of Italian patients.</title>
        <authorList>
            <person name="Simonelli F."/>
            <person name="Ziviello C."/>
            <person name="Testa F."/>
            <person name="Rossi S."/>
            <person name="Fazzi E."/>
            <person name="Bianchi P.E."/>
            <person name="Fossarello M."/>
            <person name="Signorini S."/>
            <person name="Bertone C."/>
            <person name="Galantuomo S."/>
            <person name="Brancati F."/>
            <person name="Valente E.M."/>
            <person name="Ciccodicola A."/>
            <person name="Rinaldi E."/>
            <person name="Auricchio A."/>
            <person name="Banfi S."/>
        </authorList>
    </citation>
    <scope>VARIANTS LCA1 TRP-768 AND GLN-795</scope>
    <scope>VARIANTS ARG-325 AND SER-701</scope>
    <scope>POSSIBLE INVOLVEMENT OF VARIANT SER-701 IN LEBER CONGENITAL AMAUROSIS</scope>
</reference>
<reference key="19">
    <citation type="journal article" date="2007" name="Nature">
        <title>Patterns of somatic mutation in human cancer genomes.</title>
        <authorList>
            <person name="Greenman C."/>
            <person name="Stephens P."/>
            <person name="Smith R."/>
            <person name="Dalgliesh G.L."/>
            <person name="Hunter C."/>
            <person name="Bignell G."/>
            <person name="Davies H."/>
            <person name="Teague J."/>
            <person name="Butler A."/>
            <person name="Stevens C."/>
            <person name="Edkins S."/>
            <person name="O'Meara S."/>
            <person name="Vastrik I."/>
            <person name="Schmidt E.E."/>
            <person name="Avis T."/>
            <person name="Barthorpe S."/>
            <person name="Bhamra G."/>
            <person name="Buck G."/>
            <person name="Choudhury B."/>
            <person name="Clements J."/>
            <person name="Cole J."/>
            <person name="Dicks E."/>
            <person name="Forbes S."/>
            <person name="Gray K."/>
            <person name="Halliday K."/>
            <person name="Harrison R."/>
            <person name="Hills K."/>
            <person name="Hinton J."/>
            <person name="Jenkinson A."/>
            <person name="Jones D."/>
            <person name="Menzies A."/>
            <person name="Mironenko T."/>
            <person name="Perry J."/>
            <person name="Raine K."/>
            <person name="Richardson D."/>
            <person name="Shepherd R."/>
            <person name="Small A."/>
            <person name="Tofts C."/>
            <person name="Varian J."/>
            <person name="Webb T."/>
            <person name="West S."/>
            <person name="Widaa S."/>
            <person name="Yates A."/>
            <person name="Cahill D.P."/>
            <person name="Louis D.N."/>
            <person name="Goldstraw P."/>
            <person name="Nicholson A.G."/>
            <person name="Brasseur F."/>
            <person name="Looijenga L."/>
            <person name="Weber B.L."/>
            <person name="Chiew Y.-E."/>
            <person name="DeFazio A."/>
            <person name="Greaves M.F."/>
            <person name="Green A.R."/>
            <person name="Campbell P."/>
            <person name="Birney E."/>
            <person name="Easton D.F."/>
            <person name="Chenevix-Trench G."/>
            <person name="Tan M.-H."/>
            <person name="Khoo S.K."/>
            <person name="Teh B.T."/>
            <person name="Yuen S.T."/>
            <person name="Leung S.Y."/>
            <person name="Wooster R."/>
            <person name="Futreal P.A."/>
            <person name="Stratton M.R."/>
        </authorList>
    </citation>
    <scope>VARIANTS [LARGE SCALE ANALYSIS] VAL-328; ASP-431; MET-507; GLU-693; SER-701 AND HIS-782</scope>
</reference>
<reference key="20">
    <citation type="journal article" date="2008" name="Arch. Ophthalmol.">
        <title>New mutation, P575L, in the GUCY2D gene in a family with autosomal dominant progressive cone degeneration.</title>
        <authorList>
            <person name="Small K.W."/>
            <person name="Silva-Garcia R."/>
            <person name="Udar N."/>
            <person name="Nguyen E.V."/>
            <person name="Heckenlively J.R."/>
        </authorList>
    </citation>
    <scope>INVOLVEMENT IN CORD6</scope>
</reference>
<reference key="21">
    <citation type="journal article" date="2008" name="Invest. Ophthalmol. Vis. Sci.">
        <title>Mutation analysis identifies GUCY2D as the major gene responsible for autosomal dominant progressive cone degeneration.</title>
        <authorList>
            <person name="Kitiratschky V.B."/>
            <person name="Wilke R."/>
            <person name="Renner A.B."/>
            <person name="Kellner U."/>
            <person name="Vadala M."/>
            <person name="Birch D.G."/>
            <person name="Wissinger B."/>
            <person name="Zrenner E."/>
            <person name="Kohl S."/>
        </authorList>
    </citation>
    <scope>INVOLVEMENT IN CORD6</scope>
    <scope>VARIANTS CORD6 CYS-838; HIS-838 AND GLY-838</scope>
</reference>
<reference key="22">
    <citation type="journal article" date="2010" name="Eur. J. Hum. Genet.">
        <title>A novel recessive GUCY2D mutation causing cone-rod dystrophy and not Leber's congenital amaurosis.</title>
        <authorList>
            <person name="Ugur Iseri S.A."/>
            <person name="Durlu Y.K."/>
            <person name="Tolun A."/>
        </authorList>
    </citation>
    <scope>INVOLVEMENT IN CORD6</scope>
    <scope>VARIANT CORD6 THR-949</scope>
</reference>
<reference key="23">
    <citation type="journal article" date="2010" name="Proc. Natl. Acad. Sci. U.S.A.">
        <title>RD3, the protein associated with Leber congenital amaurosis type 12, is required for guanylate cyclase trafficking in photoreceptor cells.</title>
        <authorList>
            <person name="Azadi S."/>
            <person name="Molday L.L."/>
            <person name="Molday R.S."/>
        </authorList>
    </citation>
    <scope>INTERACTION WITH RD3</scope>
</reference>
<reference key="24">
    <citation type="journal article" date="2011" name="Biochemistry">
        <title>Retinal degeneration 3 (RD3) protein inhibits catalytic activity of retinal membrane guanylyl cyclase (RetGC) and its stimulation by activating proteins.</title>
        <authorList>
            <person name="Peshenko I.V."/>
            <person name="Olshevskaya E.V."/>
            <person name="Azadi S."/>
            <person name="Molday L.L."/>
            <person name="Molday R.S."/>
            <person name="Dizhoor A.M."/>
        </authorList>
    </citation>
    <scope>CATALYTIC ACTIVITY</scope>
    <scope>ACTIVITY REGULATION</scope>
    <scope>BIOPHYSICOCHEMICAL PROPERTIES</scope>
    <scope>INTERACTION WITH RD3</scope>
    <scope>FUNCTION</scope>
</reference>
<reference key="25">
    <citation type="journal article" date="2012" name="Invest. Ophthalmol. Vis. Sci.">
        <title>A novel GUCY2D mutation, V933A, causes central areolar choroidal dystrophy.</title>
        <authorList>
            <person name="Hughes A.E."/>
            <person name="Meng W."/>
            <person name="Lotery A.J."/>
            <person name="Bradley D.T."/>
        </authorList>
    </citation>
    <scope>INVOLVEMENT IN CACD1</scope>
    <scope>VARIANT CACD1 ALA-933</scope>
</reference>
<reference key="26">
    <citation type="journal article" date="2015" name="J. Biol. Chem.">
        <title>Dimerization Domain of Retinal Membrane Guanylyl Cyclase 1 (RetGC1) Is an Essential Part of Guanylyl Cyclase-activating Protein (GCAP) Binding Interface.</title>
        <authorList>
            <person name="Peshenko I.V."/>
            <person name="Olshevskaya E.V."/>
            <person name="Dizhoor A.M."/>
        </authorList>
    </citation>
    <scope>MUTAGENESIS OF ARG-822 AND MET-823</scope>
    <scope>FUNCTION</scope>
    <scope>CATALYTIC ACTIVITY</scope>
</reference>
<reference key="27">
    <citation type="journal article" date="2018" name="Front. Mol. Neurosci.">
        <title>Photoreceptor Guanylate Cyclase (GUCY2D) Mutations Cause Retinal Dystrophies by Severe Malfunction of Ca2+-Dependent Cyclic GMP Synthesis.</title>
        <authorList>
            <person name="Wimberg H."/>
            <person name="Lev D."/>
            <person name="Yosovich K."/>
            <person name="Namburi P."/>
            <person name="Banin E."/>
            <person name="Sharon D."/>
            <person name="Koch K.W."/>
        </authorList>
    </citation>
    <scope>CATALYTIC ACTIVITY</scope>
    <scope>FUNCTION</scope>
    <scope>SUBCELLULAR LOCATION</scope>
    <scope>VARIANT LCA1 LEU-902</scope>
    <scope>CHARACTERIZATION OF VARIANT LCA1 VAL-710 AND LEU-902</scope>
    <scope>VARIANT CORD6 ARG-873</scope>
    <scope>CHARACTERIZATION OF VARIANTS CORD6 LYS-841; ASN-846 AND ARG-873</scope>
</reference>
<reference key="28">
    <citation type="journal article" date="2011" name="Mol. Vis.">
        <title>Mutation analysis at codon 838 of the Guanylate Cyclase 2D gene in Spanish families with autosomal dominant cone, cone-rod, and macular dystrophies.</title>
        <authorList>
            <person name="Garcia-Hoyos M."/>
            <person name="Auz-Alexandre C.L."/>
            <person name="Almoguera B."/>
            <person name="Cantalapiedra D."/>
            <person name="Riveiro-Alvarez R."/>
            <person name="Lopez-Martinez M.A."/>
            <person name="Gimenez A."/>
            <person name="Blanco-Kelly F."/>
            <person name="Avila-Fernandez A."/>
            <person name="Trujillo-Tiebas M.J."/>
            <person name="Garcia-Sandoval B."/>
            <person name="Ramos C."/>
            <person name="Ayuso C."/>
        </authorList>
    </citation>
    <scope>VARIANT CORD6 PRO-838</scope>
</reference>
<reference key="29">
    <citation type="journal article" date="2011" name="Mol. Vis.">
        <title>A recurrent mutation in GUCY2D associated with autosomal dominant cone dystrophy in a Chinese family.</title>
        <authorList>
            <person name="Xiao X."/>
            <person name="Guo X."/>
            <person name="Jia X."/>
            <person name="Li S."/>
            <person name="Wang P."/>
            <person name="Zhang Q."/>
        </authorList>
    </citation>
    <scope>VARIANT CORD6 HIS-838</scope>
</reference>
<reference key="30">
    <citation type="journal article" date="2011" name="PLoS ONE">
        <title>Detection of variants in 15 genes in 87 unrelated Chinese patients with Leber congenital amaurosis.</title>
        <authorList>
            <person name="Li L."/>
            <person name="Xiao X."/>
            <person name="Li S."/>
            <person name="Jia X."/>
            <person name="Wang P."/>
            <person name="Guo X."/>
            <person name="Jiao X."/>
            <person name="Zhang Q."/>
            <person name="Hejtmancik J.F."/>
        </authorList>
    </citation>
    <scope>VARIANTS LCA1 MET-55; VAL-103; MET-312; 405-LEU-ASP-406 DELINS PRO-ASN; CYS-438; LEU-640; GLN-660; HIS-728; ALA-734; TRP-768; ARG-784; LEU-1007 AND GLY-ILE-1027 INS</scope>
    <scope>VARIANTS ARG-21; SER-52 AND SER-701</scope>
</reference>
<reference key="31">
    <citation type="journal article" date="2013" name="Mol. Vis.">
        <title>A novel GUCY2D mutation in a Chinese family with dominant cone dystrophy.</title>
        <authorList>
            <person name="Zhao X."/>
            <person name="Ren Y."/>
            <person name="Zhang X."/>
            <person name="Chen C."/>
            <person name="Dong B."/>
            <person name="Li Y."/>
        </authorList>
    </citation>
    <scope>VARIANT CORD6 ALA-849</scope>
</reference>
<reference key="32">
    <citation type="journal article" date="2014" name="Eye">
        <title>A detailed phenotypic description of autosomal dominant cone dystrophy due to a de novo mutation in the GUCY2D gene.</title>
        <authorList>
            <person name="Mukherjee R."/>
            <person name="Robson A.G."/>
            <person name="Holder G.E."/>
            <person name="Stockman A."/>
            <person name="Egan C.A."/>
            <person name="Moore A.T."/>
            <person name="Webster A.R."/>
        </authorList>
    </citation>
    <scope>VARIANT CORD6 HIS-838</scope>
</reference>
<reference key="33">
    <citation type="journal article" date="2014" name="Invest. Ophthalmol. Vis. Sci.">
        <title>Whole exome sequencing reveals GUCY2D as a major gene associated with cone and cone-rod dystrophy in Israel.</title>
        <authorList>
            <person name="Lazar C.H."/>
            <person name="Mutsuddi M."/>
            <person name="Kimchi A."/>
            <person name="Zelinger L."/>
            <person name="Mizrahi-Meissonnier L."/>
            <person name="Marks-Ohana D."/>
            <person name="Boleda A."/>
            <person name="Ratnapriya R."/>
            <person name="Sharon D."/>
            <person name="Swaroop A."/>
            <person name="Banin E."/>
        </authorList>
    </citation>
    <scope>VARIANTS CORD6 CYS-838; LYS-841 AND ASN-846</scope>
</reference>
<reference key="34">
    <citation type="journal article" date="2016" name="BMC Med. Genet.">
        <title>Novel GUCY2D mutation causes phenotypic variability of Leber congenital amaurosis in a large kindred.</title>
        <authorList>
            <person name="Gradstein L."/>
            <person name="Zolotushko J."/>
            <person name="Sergeev Y.V."/>
            <person name="Lavy I."/>
            <person name="Narkis G."/>
            <person name="Perez Y."/>
            <person name="Guigui S."/>
            <person name="Sharon D."/>
            <person name="Banin E."/>
            <person name="Walter E."/>
            <person name="Lifshitz T."/>
            <person name="Birk O.S."/>
        </authorList>
    </citation>
    <scope>VARIANT LCA1 VAL-710</scope>
</reference>
<reference key="35">
    <citation type="journal article" date="2018" name="Am. J. Ophthalmol.">
        <title>Expanded Retinal Disease Spectrum Associated With Autosomal Recessive Mutations in GUCY2D.</title>
        <authorList>
            <person name="Stunkel M.L."/>
            <person name="Brodie S.E."/>
            <person name="Cideciyan A.V."/>
            <person name="Pfeifer W.L."/>
            <person name="Kennedy E.L."/>
            <person name="Stone E.M."/>
            <person name="Jacobson S.G."/>
            <person name="Drack A.V."/>
        </authorList>
    </citation>
    <scope>INVOLVEMENT IN CSNB1I</scope>
    <scope>VARIANT CSNB1I TRP-768</scope>
</reference>